<gene>
    <name evidence="1" type="primary">dnaJ</name>
    <name type="ordered locus">KPK_4741</name>
</gene>
<keyword id="KW-0143">Chaperone</keyword>
<keyword id="KW-0963">Cytoplasm</keyword>
<keyword id="KW-0235">DNA replication</keyword>
<keyword id="KW-0479">Metal-binding</keyword>
<keyword id="KW-0677">Repeat</keyword>
<keyword id="KW-0346">Stress response</keyword>
<keyword id="KW-0862">Zinc</keyword>
<keyword id="KW-0863">Zinc-finger</keyword>
<comment type="function">
    <text evidence="1">Participates actively in the response to hyperosmotic and heat shock by preventing the aggregation of stress-denatured proteins and by disaggregating proteins, also in an autonomous, DnaK-independent fashion. Unfolded proteins bind initially to DnaJ; upon interaction with the DnaJ-bound protein, DnaK hydrolyzes its bound ATP, resulting in the formation of a stable complex. GrpE releases ADP from DnaK; ATP binding to DnaK triggers the release of the substrate protein, thus completing the reaction cycle. Several rounds of ATP-dependent interactions between DnaJ, DnaK and GrpE are required for fully efficient folding. Also involved, together with DnaK and GrpE, in the DNA replication of plasmids through activation of initiation proteins.</text>
</comment>
<comment type="cofactor">
    <cofactor evidence="1">
        <name>Zn(2+)</name>
        <dbReference type="ChEBI" id="CHEBI:29105"/>
    </cofactor>
    <text evidence="1">Binds 2 Zn(2+) ions per monomer.</text>
</comment>
<comment type="subunit">
    <text evidence="1">Homodimer.</text>
</comment>
<comment type="subcellular location">
    <subcellularLocation>
        <location evidence="1">Cytoplasm</location>
    </subcellularLocation>
</comment>
<comment type="domain">
    <text evidence="1">The J domain is necessary and sufficient to stimulate DnaK ATPase activity. Zinc center 1 plays an important role in the autonomous, DnaK-independent chaperone activity of DnaJ. Zinc center 2 is essential for interaction with DnaK and for DnaJ activity.</text>
</comment>
<comment type="similarity">
    <text evidence="1">Belongs to the DnaJ family.</text>
</comment>
<name>DNAJ_KLEP3</name>
<evidence type="ECO:0000255" key="1">
    <source>
        <dbReference type="HAMAP-Rule" id="MF_01152"/>
    </source>
</evidence>
<sequence length="377" mass="40969">MAKQDYYEILGVSKTAEEREIKKAYKRLAMKYHPDRNQGDKEAEAKFKEIKEAYEILTDAQKRAAYDQYGHAAFEQGGMGGGGGFGGGADFSDIFGDVFGDIFGGGRGRQRAARGADLRYNMELTLEEAVRGVTKEIRIPTLEECDVCHGSGAKAGSKPQTCPTCHGAGQVQMRQGFFAVQQTCPHCQGRGTLIKDPCNKCHGHGRVEKTKTLSVKIPAGVDTGDRIRLAGEGEAGEHGAPAGDLYVQVQVKQHAIFEREGNNLYCEVPINFTMAALGGEIEVPTLDGRVSLKVPGETQTGKLFRMRGKGVKSVRGGAQGDLLCRVVVETPVGLNEKQKQLLKELQESFGGPTGENNSPRSKSFFDGVKKFFDDLTR</sequence>
<reference key="1">
    <citation type="journal article" date="2008" name="PLoS Genet.">
        <title>Complete genome sequence of the N2-fixing broad host range endophyte Klebsiella pneumoniae 342 and virulence predictions verified in mice.</title>
        <authorList>
            <person name="Fouts D.E."/>
            <person name="Tyler H.L."/>
            <person name="DeBoy R.T."/>
            <person name="Daugherty S."/>
            <person name="Ren Q."/>
            <person name="Badger J.H."/>
            <person name="Durkin A.S."/>
            <person name="Huot H."/>
            <person name="Shrivastava S."/>
            <person name="Kothari S."/>
            <person name="Dodson R.J."/>
            <person name="Mohamoud Y."/>
            <person name="Khouri H."/>
            <person name="Roesch L.F.W."/>
            <person name="Krogfelt K.A."/>
            <person name="Struve C."/>
            <person name="Triplett E.W."/>
            <person name="Methe B.A."/>
        </authorList>
    </citation>
    <scope>NUCLEOTIDE SEQUENCE [LARGE SCALE GENOMIC DNA]</scope>
    <source>
        <strain>342</strain>
    </source>
</reference>
<proteinExistence type="inferred from homology"/>
<accession>B5Y241</accession>
<feature type="chain" id="PRO_1000137694" description="Chaperone protein DnaJ">
    <location>
        <begin position="1"/>
        <end position="377"/>
    </location>
</feature>
<feature type="domain" description="J" evidence="1">
    <location>
        <begin position="5"/>
        <end position="70"/>
    </location>
</feature>
<feature type="repeat" description="CXXCXGXG motif">
    <location>
        <begin position="145"/>
        <end position="152"/>
    </location>
</feature>
<feature type="repeat" description="CXXCXGXG motif">
    <location>
        <begin position="162"/>
        <end position="169"/>
    </location>
</feature>
<feature type="repeat" description="CXXCXGXG motif">
    <location>
        <begin position="184"/>
        <end position="191"/>
    </location>
</feature>
<feature type="repeat" description="CXXCXGXG motif">
    <location>
        <begin position="198"/>
        <end position="205"/>
    </location>
</feature>
<feature type="zinc finger region" description="CR-type" evidence="1">
    <location>
        <begin position="132"/>
        <end position="210"/>
    </location>
</feature>
<feature type="binding site" evidence="1">
    <location>
        <position position="145"/>
    </location>
    <ligand>
        <name>Zn(2+)</name>
        <dbReference type="ChEBI" id="CHEBI:29105"/>
        <label>1</label>
    </ligand>
</feature>
<feature type="binding site" evidence="1">
    <location>
        <position position="148"/>
    </location>
    <ligand>
        <name>Zn(2+)</name>
        <dbReference type="ChEBI" id="CHEBI:29105"/>
        <label>1</label>
    </ligand>
</feature>
<feature type="binding site" evidence="1">
    <location>
        <position position="162"/>
    </location>
    <ligand>
        <name>Zn(2+)</name>
        <dbReference type="ChEBI" id="CHEBI:29105"/>
        <label>2</label>
    </ligand>
</feature>
<feature type="binding site" evidence="1">
    <location>
        <position position="165"/>
    </location>
    <ligand>
        <name>Zn(2+)</name>
        <dbReference type="ChEBI" id="CHEBI:29105"/>
        <label>2</label>
    </ligand>
</feature>
<feature type="binding site" evidence="1">
    <location>
        <position position="184"/>
    </location>
    <ligand>
        <name>Zn(2+)</name>
        <dbReference type="ChEBI" id="CHEBI:29105"/>
        <label>2</label>
    </ligand>
</feature>
<feature type="binding site" evidence="1">
    <location>
        <position position="187"/>
    </location>
    <ligand>
        <name>Zn(2+)</name>
        <dbReference type="ChEBI" id="CHEBI:29105"/>
        <label>2</label>
    </ligand>
</feature>
<feature type="binding site" evidence="1">
    <location>
        <position position="198"/>
    </location>
    <ligand>
        <name>Zn(2+)</name>
        <dbReference type="ChEBI" id="CHEBI:29105"/>
        <label>1</label>
    </ligand>
</feature>
<feature type="binding site" evidence="1">
    <location>
        <position position="201"/>
    </location>
    <ligand>
        <name>Zn(2+)</name>
        <dbReference type="ChEBI" id="CHEBI:29105"/>
        <label>1</label>
    </ligand>
</feature>
<organism>
    <name type="scientific">Klebsiella pneumoniae (strain 342)</name>
    <dbReference type="NCBI Taxonomy" id="507522"/>
    <lineage>
        <taxon>Bacteria</taxon>
        <taxon>Pseudomonadati</taxon>
        <taxon>Pseudomonadota</taxon>
        <taxon>Gammaproteobacteria</taxon>
        <taxon>Enterobacterales</taxon>
        <taxon>Enterobacteriaceae</taxon>
        <taxon>Klebsiella/Raoultella group</taxon>
        <taxon>Klebsiella</taxon>
        <taxon>Klebsiella pneumoniae complex</taxon>
    </lineage>
</organism>
<protein>
    <recommendedName>
        <fullName evidence="1">Chaperone protein DnaJ</fullName>
    </recommendedName>
</protein>
<dbReference type="EMBL" id="CP000964">
    <property type="protein sequence ID" value="ACI06991.1"/>
    <property type="molecule type" value="Genomic_DNA"/>
</dbReference>
<dbReference type="SMR" id="B5Y241"/>
<dbReference type="KEGG" id="kpe:KPK_4741"/>
<dbReference type="HOGENOM" id="CLU_017633_0_7_6"/>
<dbReference type="Proteomes" id="UP000001734">
    <property type="component" value="Chromosome"/>
</dbReference>
<dbReference type="GO" id="GO:0005737">
    <property type="term" value="C:cytoplasm"/>
    <property type="evidence" value="ECO:0007669"/>
    <property type="project" value="UniProtKB-SubCell"/>
</dbReference>
<dbReference type="GO" id="GO:0005524">
    <property type="term" value="F:ATP binding"/>
    <property type="evidence" value="ECO:0007669"/>
    <property type="project" value="InterPro"/>
</dbReference>
<dbReference type="GO" id="GO:0031072">
    <property type="term" value="F:heat shock protein binding"/>
    <property type="evidence" value="ECO:0007669"/>
    <property type="project" value="InterPro"/>
</dbReference>
<dbReference type="GO" id="GO:0051082">
    <property type="term" value="F:unfolded protein binding"/>
    <property type="evidence" value="ECO:0007669"/>
    <property type="project" value="UniProtKB-UniRule"/>
</dbReference>
<dbReference type="GO" id="GO:0008270">
    <property type="term" value="F:zinc ion binding"/>
    <property type="evidence" value="ECO:0007669"/>
    <property type="project" value="UniProtKB-UniRule"/>
</dbReference>
<dbReference type="GO" id="GO:0051085">
    <property type="term" value="P:chaperone cofactor-dependent protein refolding"/>
    <property type="evidence" value="ECO:0007669"/>
    <property type="project" value="TreeGrafter"/>
</dbReference>
<dbReference type="GO" id="GO:0006260">
    <property type="term" value="P:DNA replication"/>
    <property type="evidence" value="ECO:0007669"/>
    <property type="project" value="UniProtKB-KW"/>
</dbReference>
<dbReference type="GO" id="GO:0042026">
    <property type="term" value="P:protein refolding"/>
    <property type="evidence" value="ECO:0007669"/>
    <property type="project" value="TreeGrafter"/>
</dbReference>
<dbReference type="GO" id="GO:0009408">
    <property type="term" value="P:response to heat"/>
    <property type="evidence" value="ECO:0007669"/>
    <property type="project" value="InterPro"/>
</dbReference>
<dbReference type="CDD" id="cd06257">
    <property type="entry name" value="DnaJ"/>
    <property type="match status" value="1"/>
</dbReference>
<dbReference type="CDD" id="cd10747">
    <property type="entry name" value="DnaJ_C"/>
    <property type="match status" value="1"/>
</dbReference>
<dbReference type="CDD" id="cd10719">
    <property type="entry name" value="DnaJ_zf"/>
    <property type="match status" value="1"/>
</dbReference>
<dbReference type="FunFam" id="1.10.287.110:FF:000003">
    <property type="entry name" value="Molecular chaperone DnaJ"/>
    <property type="match status" value="1"/>
</dbReference>
<dbReference type="FunFam" id="2.10.230.10:FF:000002">
    <property type="entry name" value="Molecular chaperone DnaJ"/>
    <property type="match status" value="1"/>
</dbReference>
<dbReference type="FunFam" id="2.60.260.20:FF:000004">
    <property type="entry name" value="Molecular chaperone DnaJ"/>
    <property type="match status" value="1"/>
</dbReference>
<dbReference type="Gene3D" id="1.10.287.110">
    <property type="entry name" value="DnaJ domain"/>
    <property type="match status" value="1"/>
</dbReference>
<dbReference type="Gene3D" id="2.10.230.10">
    <property type="entry name" value="Heat shock protein DnaJ, cysteine-rich domain"/>
    <property type="match status" value="1"/>
</dbReference>
<dbReference type="Gene3D" id="2.60.260.20">
    <property type="entry name" value="Urease metallochaperone UreE, N-terminal domain"/>
    <property type="match status" value="2"/>
</dbReference>
<dbReference type="HAMAP" id="MF_01152">
    <property type="entry name" value="DnaJ"/>
    <property type="match status" value="1"/>
</dbReference>
<dbReference type="InterPro" id="IPR012724">
    <property type="entry name" value="DnaJ"/>
</dbReference>
<dbReference type="InterPro" id="IPR002939">
    <property type="entry name" value="DnaJ_C"/>
</dbReference>
<dbReference type="InterPro" id="IPR001623">
    <property type="entry name" value="DnaJ_domain"/>
</dbReference>
<dbReference type="InterPro" id="IPR018253">
    <property type="entry name" value="DnaJ_domain_CS"/>
</dbReference>
<dbReference type="InterPro" id="IPR008971">
    <property type="entry name" value="HSP40/DnaJ_pept-bd"/>
</dbReference>
<dbReference type="InterPro" id="IPR001305">
    <property type="entry name" value="HSP_DnaJ_Cys-rich_dom"/>
</dbReference>
<dbReference type="InterPro" id="IPR036410">
    <property type="entry name" value="HSP_DnaJ_Cys-rich_dom_sf"/>
</dbReference>
<dbReference type="InterPro" id="IPR036869">
    <property type="entry name" value="J_dom_sf"/>
</dbReference>
<dbReference type="NCBIfam" id="TIGR02349">
    <property type="entry name" value="DnaJ_bact"/>
    <property type="match status" value="1"/>
</dbReference>
<dbReference type="NCBIfam" id="NF008035">
    <property type="entry name" value="PRK10767.1"/>
    <property type="match status" value="1"/>
</dbReference>
<dbReference type="PANTHER" id="PTHR43096:SF48">
    <property type="entry name" value="CHAPERONE PROTEIN DNAJ"/>
    <property type="match status" value="1"/>
</dbReference>
<dbReference type="PANTHER" id="PTHR43096">
    <property type="entry name" value="DNAJ HOMOLOG 1, MITOCHONDRIAL-RELATED"/>
    <property type="match status" value="1"/>
</dbReference>
<dbReference type="Pfam" id="PF00226">
    <property type="entry name" value="DnaJ"/>
    <property type="match status" value="1"/>
</dbReference>
<dbReference type="Pfam" id="PF01556">
    <property type="entry name" value="DnaJ_C"/>
    <property type="match status" value="1"/>
</dbReference>
<dbReference type="Pfam" id="PF00684">
    <property type="entry name" value="DnaJ_CXXCXGXG"/>
    <property type="match status" value="1"/>
</dbReference>
<dbReference type="PRINTS" id="PR00625">
    <property type="entry name" value="JDOMAIN"/>
</dbReference>
<dbReference type="SMART" id="SM00271">
    <property type="entry name" value="DnaJ"/>
    <property type="match status" value="1"/>
</dbReference>
<dbReference type="SUPFAM" id="SSF46565">
    <property type="entry name" value="Chaperone J-domain"/>
    <property type="match status" value="1"/>
</dbReference>
<dbReference type="SUPFAM" id="SSF57938">
    <property type="entry name" value="DnaJ/Hsp40 cysteine-rich domain"/>
    <property type="match status" value="1"/>
</dbReference>
<dbReference type="SUPFAM" id="SSF49493">
    <property type="entry name" value="HSP40/DnaJ peptide-binding domain"/>
    <property type="match status" value="2"/>
</dbReference>
<dbReference type="PROSITE" id="PS00636">
    <property type="entry name" value="DNAJ_1"/>
    <property type="match status" value="1"/>
</dbReference>
<dbReference type="PROSITE" id="PS50076">
    <property type="entry name" value="DNAJ_2"/>
    <property type="match status" value="1"/>
</dbReference>
<dbReference type="PROSITE" id="PS51188">
    <property type="entry name" value="ZF_CR"/>
    <property type="match status" value="1"/>
</dbReference>